<organism>
    <name type="scientific">Chlamydia trachomatis serovar L2 (strain ATCC VR-902B / DSM 19102 / 434/Bu)</name>
    <dbReference type="NCBI Taxonomy" id="471472"/>
    <lineage>
        <taxon>Bacteria</taxon>
        <taxon>Pseudomonadati</taxon>
        <taxon>Chlamydiota</taxon>
        <taxon>Chlamydiia</taxon>
        <taxon>Chlamydiales</taxon>
        <taxon>Chlamydiaceae</taxon>
        <taxon>Chlamydia/Chlamydophila group</taxon>
        <taxon>Chlamydia</taxon>
    </lineage>
</organism>
<comment type="function">
    <text evidence="1">Negative regulator of class I heat shock genes (grpE-dnaK-dnaJ and groELS operons). Prevents heat-shock induction of these operons.</text>
</comment>
<comment type="similarity">
    <text evidence="1">Belongs to the HrcA family.</text>
</comment>
<gene>
    <name evidence="1" type="primary">hrcA</name>
    <name type="ordered locus">CTL0650</name>
</gene>
<protein>
    <recommendedName>
        <fullName evidence="1">Heat-inducible transcription repressor HrcA</fullName>
    </recommendedName>
</protein>
<evidence type="ECO:0000255" key="1">
    <source>
        <dbReference type="HAMAP-Rule" id="MF_00081"/>
    </source>
</evidence>
<sequence>MENRIEMSQLRASKKDSKISYVLLMATKLYLESGQPVGSKLLEETYCSDLSSATIRNYFAQLETNGFLRKNHISGGRIPTDLAFRYYADHNAPFLEQEEILAIQQKLTELPEYSKNIVKDLQKASEVLSDILQLPVCFSSPRFESDSVINIQLVAIDDQRVVFVLSTEFGQVFTDVLWLPEQLPENSLKRIEGFLQNYLRKQPSDSLLSQKEEDLGMVLYNEVVVRYLTRYCHFSEEDLYQTGLSRLLKYETFKDPETLAQGLAFFENRKHMCQLLNTYLHKETPTAFIGRELTDIVGNTDPSCAVITIPYYMDRTPLGAFGVLGPMNLPYQQVFGTLSLFTERLKVILTQSFYKFKLSFRRPCPTDPRCSQRPAELTRSSSIKLLPAKELS</sequence>
<keyword id="KW-0678">Repressor</keyword>
<keyword id="KW-0346">Stress response</keyword>
<keyword id="KW-0804">Transcription</keyword>
<keyword id="KW-0805">Transcription regulation</keyword>
<reference key="1">
    <citation type="journal article" date="2008" name="Genome Res.">
        <title>Chlamydia trachomatis: genome sequence analysis of lymphogranuloma venereum isolates.</title>
        <authorList>
            <person name="Thomson N.R."/>
            <person name="Holden M.T.G."/>
            <person name="Carder C."/>
            <person name="Lennard N."/>
            <person name="Lockey S.J."/>
            <person name="Marsh P."/>
            <person name="Skipp P."/>
            <person name="O'Connor C.D."/>
            <person name="Goodhead I."/>
            <person name="Norbertzcak H."/>
            <person name="Harris B."/>
            <person name="Ormond D."/>
            <person name="Rance R."/>
            <person name="Quail M.A."/>
            <person name="Parkhill J."/>
            <person name="Stephens R.S."/>
            <person name="Clarke I.N."/>
        </authorList>
    </citation>
    <scope>NUCLEOTIDE SEQUENCE [LARGE SCALE GENOMIC DNA]</scope>
    <source>
        <strain>ATCC VR-902B / DSM 19102 / 434/Bu</strain>
    </source>
</reference>
<dbReference type="EMBL" id="AM884176">
    <property type="protein sequence ID" value="CAP04090.1"/>
    <property type="molecule type" value="Genomic_DNA"/>
</dbReference>
<dbReference type="RefSeq" id="WP_012263647.1">
    <property type="nucleotide sequence ID" value="NC_010287.1"/>
</dbReference>
<dbReference type="RefSeq" id="YP_001654723.1">
    <property type="nucleotide sequence ID" value="NC_010287.1"/>
</dbReference>
<dbReference type="SMR" id="B0B7W4"/>
<dbReference type="KEGG" id="ctb:CTL0650"/>
<dbReference type="PATRIC" id="fig|471472.4.peg.700"/>
<dbReference type="HOGENOM" id="CLU_050019_1_0_0"/>
<dbReference type="Proteomes" id="UP001154402">
    <property type="component" value="Chromosome"/>
</dbReference>
<dbReference type="GO" id="GO:0003677">
    <property type="term" value="F:DNA binding"/>
    <property type="evidence" value="ECO:0007669"/>
    <property type="project" value="InterPro"/>
</dbReference>
<dbReference type="GO" id="GO:0045892">
    <property type="term" value="P:negative regulation of DNA-templated transcription"/>
    <property type="evidence" value="ECO:0007669"/>
    <property type="project" value="UniProtKB-UniRule"/>
</dbReference>
<dbReference type="FunFam" id="1.10.10.10:FF:000785">
    <property type="entry name" value="Heat-inducible transcription repressor HrcA"/>
    <property type="match status" value="1"/>
</dbReference>
<dbReference type="FunFam" id="3.30.450.40:FF:000154">
    <property type="entry name" value="Heat-inducible transcription repressor HrcA"/>
    <property type="match status" value="1"/>
</dbReference>
<dbReference type="Gene3D" id="3.30.450.40">
    <property type="match status" value="1"/>
</dbReference>
<dbReference type="Gene3D" id="1.10.10.10">
    <property type="entry name" value="Winged helix-like DNA-binding domain superfamily/Winged helix DNA-binding domain"/>
    <property type="match status" value="1"/>
</dbReference>
<dbReference type="HAMAP" id="MF_00081">
    <property type="entry name" value="HrcA"/>
    <property type="match status" value="1"/>
</dbReference>
<dbReference type="InterPro" id="IPR029016">
    <property type="entry name" value="GAF-like_dom_sf"/>
</dbReference>
<dbReference type="InterPro" id="IPR002571">
    <property type="entry name" value="HrcA"/>
</dbReference>
<dbReference type="InterPro" id="IPR021153">
    <property type="entry name" value="HrcA_C"/>
</dbReference>
<dbReference type="InterPro" id="IPR036388">
    <property type="entry name" value="WH-like_DNA-bd_sf"/>
</dbReference>
<dbReference type="InterPro" id="IPR036390">
    <property type="entry name" value="WH_DNA-bd_sf"/>
</dbReference>
<dbReference type="NCBIfam" id="TIGR00331">
    <property type="entry name" value="hrcA"/>
    <property type="match status" value="1"/>
</dbReference>
<dbReference type="PANTHER" id="PTHR34824">
    <property type="entry name" value="HEAT-INDUCIBLE TRANSCRIPTION REPRESSOR HRCA"/>
    <property type="match status" value="1"/>
</dbReference>
<dbReference type="PANTHER" id="PTHR34824:SF1">
    <property type="entry name" value="HEAT-INDUCIBLE TRANSCRIPTION REPRESSOR HRCA"/>
    <property type="match status" value="1"/>
</dbReference>
<dbReference type="Pfam" id="PF01628">
    <property type="entry name" value="HrcA"/>
    <property type="match status" value="1"/>
</dbReference>
<dbReference type="PIRSF" id="PIRSF005485">
    <property type="entry name" value="HrcA"/>
    <property type="match status" value="1"/>
</dbReference>
<dbReference type="SUPFAM" id="SSF55781">
    <property type="entry name" value="GAF domain-like"/>
    <property type="match status" value="1"/>
</dbReference>
<dbReference type="SUPFAM" id="SSF46785">
    <property type="entry name" value="Winged helix' DNA-binding domain"/>
    <property type="match status" value="1"/>
</dbReference>
<name>HRCA_CHLT2</name>
<feature type="chain" id="PRO_1000092804" description="Heat-inducible transcription repressor HrcA">
    <location>
        <begin position="1"/>
        <end position="392"/>
    </location>
</feature>
<proteinExistence type="inferred from homology"/>
<accession>B0B7W4</accession>